<accession>A9R751</accession>
<gene>
    <name evidence="1" type="primary">ubiD</name>
    <name type="ordered locus">YpAngola_A1909</name>
</gene>
<comment type="function">
    <text evidence="1">Catalyzes the decarboxylation of 3-octaprenyl-4-hydroxy benzoate to 2-octaprenylphenol, an intermediate step in ubiquinone biosynthesis.</text>
</comment>
<comment type="catalytic activity">
    <reaction evidence="1">
        <text>a 4-hydroxy-3-(all-trans-polyprenyl)benzoate + H(+) = a 2-(all-trans-polyprenyl)phenol + CO2</text>
        <dbReference type="Rhea" id="RHEA:41680"/>
        <dbReference type="Rhea" id="RHEA-COMP:9514"/>
        <dbReference type="Rhea" id="RHEA-COMP:9516"/>
        <dbReference type="ChEBI" id="CHEBI:1269"/>
        <dbReference type="ChEBI" id="CHEBI:15378"/>
        <dbReference type="ChEBI" id="CHEBI:16526"/>
        <dbReference type="ChEBI" id="CHEBI:78396"/>
        <dbReference type="EC" id="4.1.1.98"/>
    </reaction>
</comment>
<comment type="cofactor">
    <cofactor evidence="1">
        <name>prenylated FMN</name>
        <dbReference type="ChEBI" id="CHEBI:87746"/>
    </cofactor>
    <text evidence="1">Binds 1 prenylated FMN per subunit.</text>
</comment>
<comment type="cofactor">
    <cofactor evidence="1">
        <name>Mn(2+)</name>
        <dbReference type="ChEBI" id="CHEBI:29035"/>
    </cofactor>
</comment>
<comment type="pathway">
    <text evidence="1">Cofactor biosynthesis; ubiquinone biosynthesis.</text>
</comment>
<comment type="subunit">
    <text evidence="1">Homohexamer.</text>
</comment>
<comment type="subcellular location">
    <subcellularLocation>
        <location evidence="1">Cell membrane</location>
        <topology evidence="1">Peripheral membrane protein</topology>
    </subcellularLocation>
</comment>
<comment type="similarity">
    <text evidence="1">Belongs to the UbiD family.</text>
</comment>
<reference key="1">
    <citation type="journal article" date="2010" name="J. Bacteriol.">
        <title>Genome sequence of the deep-rooted Yersinia pestis strain Angola reveals new insights into the evolution and pangenome of the plague bacterium.</title>
        <authorList>
            <person name="Eppinger M."/>
            <person name="Worsham P.L."/>
            <person name="Nikolich M.P."/>
            <person name="Riley D.R."/>
            <person name="Sebastian Y."/>
            <person name="Mou S."/>
            <person name="Achtman M."/>
            <person name="Lindler L.E."/>
            <person name="Ravel J."/>
        </authorList>
    </citation>
    <scope>NUCLEOTIDE SEQUENCE [LARGE SCALE GENOMIC DNA]</scope>
    <source>
        <strain>Angola</strain>
    </source>
</reference>
<feature type="chain" id="PRO_1000186726" description="3-octaprenyl-4-hydroxybenzoate carboxy-lyase">
    <location>
        <begin position="1"/>
        <end position="495"/>
    </location>
</feature>
<feature type="active site" description="Proton donor" evidence="1">
    <location>
        <position position="287"/>
    </location>
</feature>
<feature type="binding site" evidence="1">
    <location>
        <position position="172"/>
    </location>
    <ligand>
        <name>Mn(2+)</name>
        <dbReference type="ChEBI" id="CHEBI:29035"/>
    </ligand>
</feature>
<feature type="binding site" evidence="1">
    <location>
        <begin position="175"/>
        <end position="177"/>
    </location>
    <ligand>
        <name>prenylated FMN</name>
        <dbReference type="ChEBI" id="CHEBI:87746"/>
    </ligand>
</feature>
<feature type="binding site" evidence="1">
    <location>
        <begin position="189"/>
        <end position="191"/>
    </location>
    <ligand>
        <name>prenylated FMN</name>
        <dbReference type="ChEBI" id="CHEBI:87746"/>
    </ligand>
</feature>
<feature type="binding site" evidence="1">
    <location>
        <begin position="194"/>
        <end position="195"/>
    </location>
    <ligand>
        <name>prenylated FMN</name>
        <dbReference type="ChEBI" id="CHEBI:87746"/>
    </ligand>
</feature>
<feature type="binding site" evidence="1">
    <location>
        <position position="238"/>
    </location>
    <ligand>
        <name>Mn(2+)</name>
        <dbReference type="ChEBI" id="CHEBI:29035"/>
    </ligand>
</feature>
<keyword id="KW-1003">Cell membrane</keyword>
<keyword id="KW-0210">Decarboxylase</keyword>
<keyword id="KW-0285">Flavoprotein</keyword>
<keyword id="KW-0288">FMN</keyword>
<keyword id="KW-0456">Lyase</keyword>
<keyword id="KW-0464">Manganese</keyword>
<keyword id="KW-0472">Membrane</keyword>
<keyword id="KW-0479">Metal-binding</keyword>
<keyword id="KW-0831">Ubiquinone biosynthesis</keyword>
<sequence length="495" mass="55979">MKYRDLRDFLSLLEQRGELKRISQPIDPYLEMTEIADRTLRAGGPALLFENPKGYSMPVLCNLFGTAKRVAMGMGQEDVSALRDVGKLLAFLKEPDPPKGFRDLFDKLPKFKQVLNMPTKRLNSAPCQEQVWQGEDVDLSRIPVMHCWPEDAAPLVSWGLTITRGPHKERQNLGIYRQQVLGKNKLIMRWLSHRGGALDYQEWCEAHPGERFPVAVALGADPATILAAVTPVPDTLSEYAFAGLLRGHKTEVVKCLSNDLEVPASAEIVLEGYIEQGDMAPEGPYGDHTGYYNEIDNFPVFTVTHITQRQDAIYHSTYTGRPPDEPAVMGVALNEVFVPILQKQFPEIVDFYLPPEGCSYRLAVVTIKKQYAGHAKRVMMGIWSFLRQFMYTKFVIVCDDDINARDWNDVIWAITTRMDPSRDTVLIENTPIDYLDFASPVSGLGSKMGLDATNKWPAETPREWGRPIKMDEDVRARIDALWDELAIFSDKDAKR</sequence>
<protein>
    <recommendedName>
        <fullName evidence="1">3-octaprenyl-4-hydroxybenzoate carboxy-lyase</fullName>
        <ecNumber evidence="1">4.1.1.98</ecNumber>
    </recommendedName>
    <alternativeName>
        <fullName evidence="1">Polyprenyl p-hydroxybenzoate decarboxylase</fullName>
    </alternativeName>
</protein>
<dbReference type="EC" id="4.1.1.98" evidence="1"/>
<dbReference type="EMBL" id="CP000901">
    <property type="protein sequence ID" value="ABX85206.1"/>
    <property type="molecule type" value="Genomic_DNA"/>
</dbReference>
<dbReference type="SMR" id="A9R751"/>
<dbReference type="KEGG" id="ypg:YpAngola_A1909"/>
<dbReference type="UniPathway" id="UPA00232"/>
<dbReference type="GO" id="GO:0005829">
    <property type="term" value="C:cytosol"/>
    <property type="evidence" value="ECO:0007669"/>
    <property type="project" value="TreeGrafter"/>
</dbReference>
<dbReference type="GO" id="GO:0005886">
    <property type="term" value="C:plasma membrane"/>
    <property type="evidence" value="ECO:0007669"/>
    <property type="project" value="UniProtKB-SubCell"/>
</dbReference>
<dbReference type="GO" id="GO:0008694">
    <property type="term" value="F:3-octaprenyl-4-hydroxybenzoate carboxy-lyase activity"/>
    <property type="evidence" value="ECO:0007669"/>
    <property type="project" value="UniProtKB-UniRule"/>
</dbReference>
<dbReference type="GO" id="GO:0046872">
    <property type="term" value="F:metal ion binding"/>
    <property type="evidence" value="ECO:0007669"/>
    <property type="project" value="UniProtKB-KW"/>
</dbReference>
<dbReference type="GO" id="GO:0006744">
    <property type="term" value="P:ubiquinone biosynthetic process"/>
    <property type="evidence" value="ECO:0007669"/>
    <property type="project" value="UniProtKB-UniRule"/>
</dbReference>
<dbReference type="FunFam" id="1.20.5.570:FF:000001">
    <property type="entry name" value="3-octaprenyl-4-hydroxybenzoate carboxy-lyase"/>
    <property type="match status" value="1"/>
</dbReference>
<dbReference type="FunFam" id="3.40.1670.10:FF:000001">
    <property type="entry name" value="3-octaprenyl-4-hydroxybenzoate carboxy-lyase"/>
    <property type="match status" value="1"/>
</dbReference>
<dbReference type="Gene3D" id="1.20.5.570">
    <property type="entry name" value="Single helix bin"/>
    <property type="match status" value="1"/>
</dbReference>
<dbReference type="Gene3D" id="3.40.1670.10">
    <property type="entry name" value="UbiD C-terminal domain-like"/>
    <property type="match status" value="1"/>
</dbReference>
<dbReference type="HAMAP" id="MF_01636">
    <property type="entry name" value="UbiD"/>
    <property type="match status" value="1"/>
</dbReference>
<dbReference type="InterPro" id="IPR002830">
    <property type="entry name" value="UbiD"/>
</dbReference>
<dbReference type="InterPro" id="IPR049381">
    <property type="entry name" value="UbiD-like_C"/>
</dbReference>
<dbReference type="InterPro" id="IPR049383">
    <property type="entry name" value="UbiD-like_N"/>
</dbReference>
<dbReference type="InterPro" id="IPR023677">
    <property type="entry name" value="UbiD_bacteria"/>
</dbReference>
<dbReference type="InterPro" id="IPR048304">
    <property type="entry name" value="UbiD_Rift_dom"/>
</dbReference>
<dbReference type="NCBIfam" id="NF008175">
    <property type="entry name" value="PRK10922.1"/>
    <property type="match status" value="1"/>
</dbReference>
<dbReference type="NCBIfam" id="TIGR00148">
    <property type="entry name" value="UbiD family decarboxylase"/>
    <property type="match status" value="1"/>
</dbReference>
<dbReference type="PANTHER" id="PTHR30108">
    <property type="entry name" value="3-OCTAPRENYL-4-HYDROXYBENZOATE CARBOXY-LYASE-RELATED"/>
    <property type="match status" value="1"/>
</dbReference>
<dbReference type="PANTHER" id="PTHR30108:SF17">
    <property type="entry name" value="FERULIC ACID DECARBOXYLASE 1"/>
    <property type="match status" value="1"/>
</dbReference>
<dbReference type="Pfam" id="PF01977">
    <property type="entry name" value="UbiD"/>
    <property type="match status" value="1"/>
</dbReference>
<dbReference type="Pfam" id="PF20696">
    <property type="entry name" value="UbiD_C"/>
    <property type="match status" value="1"/>
</dbReference>
<dbReference type="Pfam" id="PF20695">
    <property type="entry name" value="UbiD_N"/>
    <property type="match status" value="1"/>
</dbReference>
<dbReference type="SUPFAM" id="SSF50475">
    <property type="entry name" value="FMN-binding split barrel"/>
    <property type="match status" value="1"/>
</dbReference>
<dbReference type="SUPFAM" id="SSF143968">
    <property type="entry name" value="UbiD C-terminal domain-like"/>
    <property type="match status" value="1"/>
</dbReference>
<name>UBID_YERPG</name>
<evidence type="ECO:0000255" key="1">
    <source>
        <dbReference type="HAMAP-Rule" id="MF_01636"/>
    </source>
</evidence>
<organism>
    <name type="scientific">Yersinia pestis bv. Antiqua (strain Angola)</name>
    <dbReference type="NCBI Taxonomy" id="349746"/>
    <lineage>
        <taxon>Bacteria</taxon>
        <taxon>Pseudomonadati</taxon>
        <taxon>Pseudomonadota</taxon>
        <taxon>Gammaproteobacteria</taxon>
        <taxon>Enterobacterales</taxon>
        <taxon>Yersiniaceae</taxon>
        <taxon>Yersinia</taxon>
    </lineage>
</organism>
<proteinExistence type="inferred from homology"/>